<keyword id="KW-0025">Alternative splicing</keyword>
<keyword id="KW-0472">Membrane</keyword>
<keyword id="KW-0496">Mitochondrion</keyword>
<keyword id="KW-0999">Mitochondrion inner membrane</keyword>
<keyword id="KW-1185">Reference proteome</keyword>
<keyword id="KW-0812">Transmembrane</keyword>
<keyword id="KW-1133">Transmembrane helix</keyword>
<keyword id="KW-0813">Transport</keyword>
<gene>
    <name evidence="4" type="primary">MPC1</name>
    <name evidence="5" type="ordered locus">At5g20090</name>
    <name evidence="7" type="ORF">F28I16.240</name>
</gene>
<evidence type="ECO:0000250" key="1">
    <source>
        <dbReference type="UniProtKB" id="P53157"/>
    </source>
</evidence>
<evidence type="ECO:0000255" key="2"/>
<evidence type="ECO:0000269" key="3">
    <source>
    </source>
</evidence>
<evidence type="ECO:0000305" key="4"/>
<evidence type="ECO:0000312" key="5">
    <source>
        <dbReference type="Araport" id="AT5G20090"/>
    </source>
</evidence>
<evidence type="ECO:0000312" key="6">
    <source>
        <dbReference type="EMBL" id="AAK93615.1"/>
    </source>
</evidence>
<evidence type="ECO:0000312" key="7">
    <source>
        <dbReference type="EMBL" id="AF296836"/>
    </source>
</evidence>
<sequence>MATSRFQAFLNSPIGPKTTHFWGPIANWGFVAAGLVDMQKPPEMISGNMSSAMCVYSALFMRFAWMVQPRNYLLLACHASNETVQLYQLSRWARAQGYLSSKKEEEKPSQ</sequence>
<organism evidence="6">
    <name type="scientific">Arabidopsis thaliana</name>
    <name type="common">Mouse-ear cress</name>
    <dbReference type="NCBI Taxonomy" id="3702"/>
    <lineage>
        <taxon>Eukaryota</taxon>
        <taxon>Viridiplantae</taxon>
        <taxon>Streptophyta</taxon>
        <taxon>Embryophyta</taxon>
        <taxon>Tracheophyta</taxon>
        <taxon>Spermatophyta</taxon>
        <taxon>Magnoliopsida</taxon>
        <taxon>eudicotyledons</taxon>
        <taxon>Gunneridae</taxon>
        <taxon>Pentapetalae</taxon>
        <taxon>rosids</taxon>
        <taxon>malvids</taxon>
        <taxon>Brassicales</taxon>
        <taxon>Brassicaceae</taxon>
        <taxon>Camelineae</taxon>
        <taxon>Arabidopsis</taxon>
    </lineage>
</organism>
<feature type="chain" id="PRO_0000431615" description="Mitochondrial pyruvate carrier 1">
    <location>
        <begin position="1"/>
        <end position="110"/>
    </location>
</feature>
<feature type="transmembrane region" description="Helical; Name=1" evidence="2">
    <location>
        <begin position="20"/>
        <end position="36"/>
    </location>
</feature>
<feature type="transmembrane region" description="Helical; Name=2" evidence="2">
    <location>
        <begin position="44"/>
        <end position="61"/>
    </location>
</feature>
<name>MPC1_ARATH</name>
<dbReference type="EMBL" id="AF296836">
    <property type="status" value="NOT_ANNOTATED_CDS"/>
    <property type="molecule type" value="Genomic_DNA"/>
</dbReference>
<dbReference type="EMBL" id="CP002688">
    <property type="protein sequence ID" value="AED92792.1"/>
    <property type="molecule type" value="Genomic_DNA"/>
</dbReference>
<dbReference type="EMBL" id="CP002688">
    <property type="protein sequence ID" value="AED92793.1"/>
    <property type="molecule type" value="Genomic_DNA"/>
</dbReference>
<dbReference type="EMBL" id="CP002688">
    <property type="protein sequence ID" value="ANM68303.1"/>
    <property type="molecule type" value="Genomic_DNA"/>
</dbReference>
<dbReference type="EMBL" id="AY050938">
    <property type="protein sequence ID" value="AAK93615.1"/>
    <property type="molecule type" value="mRNA"/>
</dbReference>
<dbReference type="EMBL" id="AY079418">
    <property type="protein sequence ID" value="AAL85149.1"/>
    <property type="molecule type" value="mRNA"/>
</dbReference>
<dbReference type="EMBL" id="AY085758">
    <property type="protein sequence ID" value="AAM62976.1"/>
    <property type="molecule type" value="mRNA"/>
</dbReference>
<dbReference type="RefSeq" id="NP_001078606.1">
    <molecule id="Q949R9-1"/>
    <property type="nucleotide sequence ID" value="NM_001085137.1"/>
</dbReference>
<dbReference type="RefSeq" id="NP_001330067.1">
    <molecule id="Q949R9-1"/>
    <property type="nucleotide sequence ID" value="NM_001343637.1"/>
</dbReference>
<dbReference type="RefSeq" id="NP_197509.1">
    <molecule id="Q949R9-1"/>
    <property type="nucleotide sequence ID" value="NM_122016.3"/>
</dbReference>
<dbReference type="SMR" id="Q949R9"/>
<dbReference type="FunCoup" id="Q949R9">
    <property type="interactions" value="3425"/>
</dbReference>
<dbReference type="STRING" id="3702.Q949R9"/>
<dbReference type="TCDB" id="2.A.105.1.4">
    <property type="family name" value="the mitochondrial pyruvate carrier (mpc) family"/>
</dbReference>
<dbReference type="PaxDb" id="3702-AT5G20090.1"/>
<dbReference type="ProteomicsDB" id="250883">
    <molecule id="Q949R9-1"/>
</dbReference>
<dbReference type="DNASU" id="832131"/>
<dbReference type="EnsemblPlants" id="AT5G20090.1">
    <molecule id="Q949R9-1"/>
    <property type="protein sequence ID" value="AT5G20090.1"/>
    <property type="gene ID" value="AT5G20090"/>
</dbReference>
<dbReference type="EnsemblPlants" id="AT5G20090.2">
    <molecule id="Q949R9-1"/>
    <property type="protein sequence ID" value="AT5G20090.2"/>
    <property type="gene ID" value="AT5G20090"/>
</dbReference>
<dbReference type="EnsemblPlants" id="AT5G20090.4">
    <molecule id="Q949R9-1"/>
    <property type="protein sequence ID" value="AT5G20090.4"/>
    <property type="gene ID" value="AT5G20090"/>
</dbReference>
<dbReference type="GeneID" id="832131"/>
<dbReference type="Gramene" id="AT5G20090.1">
    <molecule id="Q949R9-1"/>
    <property type="protein sequence ID" value="AT5G20090.1"/>
    <property type="gene ID" value="AT5G20090"/>
</dbReference>
<dbReference type="Gramene" id="AT5G20090.2">
    <molecule id="Q949R9-1"/>
    <property type="protein sequence ID" value="AT5G20090.2"/>
    <property type="gene ID" value="AT5G20090"/>
</dbReference>
<dbReference type="Gramene" id="AT5G20090.4">
    <molecule id="Q949R9-1"/>
    <property type="protein sequence ID" value="AT5G20090.4"/>
    <property type="gene ID" value="AT5G20090"/>
</dbReference>
<dbReference type="KEGG" id="ath:AT5G20090"/>
<dbReference type="Araport" id="AT5G20090"/>
<dbReference type="TAIR" id="AT5G20090">
    <property type="gene designation" value="MPC1"/>
</dbReference>
<dbReference type="eggNOG" id="KOG1590">
    <property type="taxonomic scope" value="Eukaryota"/>
</dbReference>
<dbReference type="InParanoid" id="Q949R9"/>
<dbReference type="OMA" id="FLQHFWG"/>
<dbReference type="OrthoDB" id="1697690at2759"/>
<dbReference type="PhylomeDB" id="Q949R9"/>
<dbReference type="PRO" id="PR:Q949R9"/>
<dbReference type="Proteomes" id="UP000006548">
    <property type="component" value="Chromosome 5"/>
</dbReference>
<dbReference type="ExpressionAtlas" id="Q949R9">
    <property type="expression patterns" value="baseline and differential"/>
</dbReference>
<dbReference type="GO" id="GO:0005743">
    <property type="term" value="C:mitochondrial inner membrane"/>
    <property type="evidence" value="ECO:0007669"/>
    <property type="project" value="UniProtKB-SubCell"/>
</dbReference>
<dbReference type="GO" id="GO:0005739">
    <property type="term" value="C:mitochondrion"/>
    <property type="evidence" value="ECO:0007005"/>
    <property type="project" value="TAIR"/>
</dbReference>
<dbReference type="GO" id="GO:0000325">
    <property type="term" value="C:plant-type vacuole"/>
    <property type="evidence" value="ECO:0007005"/>
    <property type="project" value="TAIR"/>
</dbReference>
<dbReference type="GO" id="GO:0005886">
    <property type="term" value="C:plasma membrane"/>
    <property type="evidence" value="ECO:0007005"/>
    <property type="project" value="TAIR"/>
</dbReference>
<dbReference type="GO" id="GO:0009536">
    <property type="term" value="C:plastid"/>
    <property type="evidence" value="ECO:0007005"/>
    <property type="project" value="TAIR"/>
</dbReference>
<dbReference type="GO" id="GO:0006850">
    <property type="term" value="P:mitochondrial pyruvate transmembrane transport"/>
    <property type="evidence" value="ECO:0000315"/>
    <property type="project" value="UniProtKB"/>
</dbReference>
<dbReference type="GO" id="GO:0010119">
    <property type="term" value="P:regulation of stomatal movement"/>
    <property type="evidence" value="ECO:0000315"/>
    <property type="project" value="TAIR"/>
</dbReference>
<dbReference type="InterPro" id="IPR005336">
    <property type="entry name" value="MPC"/>
</dbReference>
<dbReference type="PANTHER" id="PTHR14154">
    <property type="entry name" value="UPF0041 BRAIN PROTEIN 44-RELATED"/>
    <property type="match status" value="1"/>
</dbReference>
<dbReference type="Pfam" id="PF03650">
    <property type="entry name" value="MPC"/>
    <property type="match status" value="1"/>
</dbReference>
<reference key="1">
    <citation type="journal article" date="2000" name="Nature">
        <title>Sequence and analysis of chromosome 5 of the plant Arabidopsis thaliana.</title>
        <authorList>
            <person name="Tabata S."/>
            <person name="Kaneko T."/>
            <person name="Nakamura Y."/>
            <person name="Kotani H."/>
            <person name="Kato T."/>
            <person name="Asamizu E."/>
            <person name="Miyajima N."/>
            <person name="Sasamoto S."/>
            <person name="Kimura T."/>
            <person name="Hosouchi T."/>
            <person name="Kawashima K."/>
            <person name="Kohara M."/>
            <person name="Matsumoto M."/>
            <person name="Matsuno A."/>
            <person name="Muraki A."/>
            <person name="Nakayama S."/>
            <person name="Nakazaki N."/>
            <person name="Naruo K."/>
            <person name="Okumura S."/>
            <person name="Shinpo S."/>
            <person name="Takeuchi C."/>
            <person name="Wada T."/>
            <person name="Watanabe A."/>
            <person name="Yamada M."/>
            <person name="Yasuda M."/>
            <person name="Sato S."/>
            <person name="de la Bastide M."/>
            <person name="Huang E."/>
            <person name="Spiegel L."/>
            <person name="Gnoj L."/>
            <person name="O'Shaughnessy A."/>
            <person name="Preston R."/>
            <person name="Habermann K."/>
            <person name="Murray J."/>
            <person name="Johnson D."/>
            <person name="Rohlfing T."/>
            <person name="Nelson J."/>
            <person name="Stoneking T."/>
            <person name="Pepin K."/>
            <person name="Spieth J."/>
            <person name="Sekhon M."/>
            <person name="Armstrong J."/>
            <person name="Becker M."/>
            <person name="Belter E."/>
            <person name="Cordum H."/>
            <person name="Cordes M."/>
            <person name="Courtney L."/>
            <person name="Courtney W."/>
            <person name="Dante M."/>
            <person name="Du H."/>
            <person name="Edwards J."/>
            <person name="Fryman J."/>
            <person name="Haakensen B."/>
            <person name="Lamar E."/>
            <person name="Latreille P."/>
            <person name="Leonard S."/>
            <person name="Meyer R."/>
            <person name="Mulvaney E."/>
            <person name="Ozersky P."/>
            <person name="Riley A."/>
            <person name="Strowmatt C."/>
            <person name="Wagner-McPherson C."/>
            <person name="Wollam A."/>
            <person name="Yoakum M."/>
            <person name="Bell M."/>
            <person name="Dedhia N."/>
            <person name="Parnell L."/>
            <person name="Shah R."/>
            <person name="Rodriguez M."/>
            <person name="Hoon See L."/>
            <person name="Vil D."/>
            <person name="Baker J."/>
            <person name="Kirchoff K."/>
            <person name="Toth K."/>
            <person name="King L."/>
            <person name="Bahret A."/>
            <person name="Miller B."/>
            <person name="Marra M.A."/>
            <person name="Martienssen R."/>
            <person name="McCombie W.R."/>
            <person name="Wilson R.K."/>
            <person name="Murphy G."/>
            <person name="Bancroft I."/>
            <person name="Volckaert G."/>
            <person name="Wambutt R."/>
            <person name="Duesterhoeft A."/>
            <person name="Stiekema W."/>
            <person name="Pohl T."/>
            <person name="Entian K.-D."/>
            <person name="Terryn N."/>
            <person name="Hartley N."/>
            <person name="Bent E."/>
            <person name="Johnson S."/>
            <person name="Langham S.-A."/>
            <person name="McCullagh B."/>
            <person name="Robben J."/>
            <person name="Grymonprez B."/>
            <person name="Zimmermann W."/>
            <person name="Ramsperger U."/>
            <person name="Wedler H."/>
            <person name="Balke K."/>
            <person name="Wedler E."/>
            <person name="Peters S."/>
            <person name="van Staveren M."/>
            <person name="Dirkse W."/>
            <person name="Mooijman P."/>
            <person name="Klein Lankhorst R."/>
            <person name="Weitzenegger T."/>
            <person name="Bothe G."/>
            <person name="Rose M."/>
            <person name="Hauf J."/>
            <person name="Berneiser S."/>
            <person name="Hempel S."/>
            <person name="Feldpausch M."/>
            <person name="Lamberth S."/>
            <person name="Villarroel R."/>
            <person name="Gielen J."/>
            <person name="Ardiles W."/>
            <person name="Bents O."/>
            <person name="Lemcke K."/>
            <person name="Kolesov G."/>
            <person name="Mayer K.F.X."/>
            <person name="Rudd S."/>
            <person name="Schoof H."/>
            <person name="Schueller C."/>
            <person name="Zaccaria P."/>
            <person name="Mewes H.-W."/>
            <person name="Bevan M."/>
            <person name="Fransz P.F."/>
        </authorList>
    </citation>
    <scope>NUCLEOTIDE SEQUENCE [LARGE SCALE GENOMIC DNA]</scope>
    <source>
        <strain>cv. Columbia</strain>
    </source>
</reference>
<reference key="2">
    <citation type="journal article" date="2017" name="Plant J.">
        <title>Araport11: a complete reannotation of the Arabidopsis thaliana reference genome.</title>
        <authorList>
            <person name="Cheng C.Y."/>
            <person name="Krishnakumar V."/>
            <person name="Chan A.P."/>
            <person name="Thibaud-Nissen F."/>
            <person name="Schobel S."/>
            <person name="Town C.D."/>
        </authorList>
    </citation>
    <scope>GENOME REANNOTATION</scope>
    <source>
        <strain>cv. Columbia</strain>
    </source>
</reference>
<reference key="3">
    <citation type="journal article" date="2003" name="Science">
        <title>Empirical analysis of transcriptional activity in the Arabidopsis genome.</title>
        <authorList>
            <person name="Yamada K."/>
            <person name="Lim J."/>
            <person name="Dale J.M."/>
            <person name="Chen H."/>
            <person name="Shinn P."/>
            <person name="Palm C.J."/>
            <person name="Southwick A.M."/>
            <person name="Wu H.C."/>
            <person name="Kim C.J."/>
            <person name="Nguyen M."/>
            <person name="Pham P.K."/>
            <person name="Cheuk R.F."/>
            <person name="Karlin-Newmann G."/>
            <person name="Liu S.X."/>
            <person name="Lam B."/>
            <person name="Sakano H."/>
            <person name="Wu T."/>
            <person name="Yu G."/>
            <person name="Miranda M."/>
            <person name="Quach H.L."/>
            <person name="Tripp M."/>
            <person name="Chang C.H."/>
            <person name="Lee J.M."/>
            <person name="Toriumi M.J."/>
            <person name="Chan M.M."/>
            <person name="Tang C.C."/>
            <person name="Onodera C.S."/>
            <person name="Deng J.M."/>
            <person name="Akiyama K."/>
            <person name="Ansari Y."/>
            <person name="Arakawa T."/>
            <person name="Banh J."/>
            <person name="Banno F."/>
            <person name="Bowser L."/>
            <person name="Brooks S.Y."/>
            <person name="Carninci P."/>
            <person name="Chao Q."/>
            <person name="Choy N."/>
            <person name="Enju A."/>
            <person name="Goldsmith A.D."/>
            <person name="Gurjal M."/>
            <person name="Hansen N.F."/>
            <person name="Hayashizaki Y."/>
            <person name="Johnson-Hopson C."/>
            <person name="Hsuan V.W."/>
            <person name="Iida K."/>
            <person name="Karnes M."/>
            <person name="Khan S."/>
            <person name="Koesema E."/>
            <person name="Ishida J."/>
            <person name="Jiang P.X."/>
            <person name="Jones T."/>
            <person name="Kawai J."/>
            <person name="Kamiya A."/>
            <person name="Meyers C."/>
            <person name="Nakajima M."/>
            <person name="Narusaka M."/>
            <person name="Seki M."/>
            <person name="Sakurai T."/>
            <person name="Satou M."/>
            <person name="Tamse R."/>
            <person name="Vaysberg M."/>
            <person name="Wallender E.K."/>
            <person name="Wong C."/>
            <person name="Yamamura Y."/>
            <person name="Yuan S."/>
            <person name="Shinozaki K."/>
            <person name="Davis R.W."/>
            <person name="Theologis A."/>
            <person name="Ecker J.R."/>
        </authorList>
    </citation>
    <scope>NUCLEOTIDE SEQUENCE [LARGE SCALE MRNA]</scope>
    <source>
        <strain>cv. Columbia</strain>
    </source>
</reference>
<reference key="4">
    <citation type="submission" date="2002-03" db="EMBL/GenBank/DDBJ databases">
        <title>Full-length cDNA from Arabidopsis thaliana.</title>
        <authorList>
            <person name="Brover V.V."/>
            <person name="Troukhan M.E."/>
            <person name="Alexandrov N.A."/>
            <person name="Lu Y.-P."/>
            <person name="Flavell R.B."/>
            <person name="Feldmann K.A."/>
        </authorList>
    </citation>
    <scope>NUCLEOTIDE SEQUENCE [LARGE SCALE MRNA]</scope>
</reference>
<reference key="5">
    <citation type="journal article" date="2014" name="Mol. Plant">
        <title>NRGA1, a putative mitochondrial pyruvate carrier, mediates ABA regulation of guard cell ion channels and drought stress responses in Arabidopsis.</title>
        <authorList>
            <person name="Li C.L."/>
            <person name="Wang M."/>
            <person name="Ma X.Y."/>
            <person name="Zhang W."/>
        </authorList>
    </citation>
    <scope>FUNCTION</scope>
</reference>
<protein>
    <recommendedName>
        <fullName evidence="4">Mitochondrial pyruvate carrier 1</fullName>
        <shortName evidence="4">AtMPC1</shortName>
    </recommendedName>
</protein>
<proteinExistence type="inferred from homology"/>
<comment type="function">
    <text evidence="3">Mediates the uptake of pyruvate into mitochondria.</text>
</comment>
<comment type="subcellular location">
    <subcellularLocation>
        <location evidence="1">Mitochondrion inner membrane</location>
        <topology evidence="2">Multi-pass membrane protein</topology>
    </subcellularLocation>
</comment>
<comment type="alternative products">
    <event type="alternative splicing"/>
    <isoform>
        <id>Q949R9-1</id>
        <name>1</name>
        <sequence type="displayed"/>
    </isoform>
    <text>A number of isoforms are produced. According to EST sequences.</text>
</comment>
<comment type="similarity">
    <text evidence="4">Belongs to the mitochondrial pyruvate carrier (MPC) (TC 2.A.105) family.</text>
</comment>
<accession>Q949R9</accession>